<protein>
    <recommendedName>
        <fullName evidence="4">Glutamine synthetase</fullName>
        <shortName evidence="4">GS</shortName>
        <ecNumber evidence="4">6.3.1.2</ecNumber>
    </recommendedName>
    <alternativeName>
        <fullName evidence="4">Glutamate--ammonia ligase</fullName>
    </alternativeName>
    <alternativeName>
        <fullName evidence="4">Glutamine synthetase I beta</fullName>
        <shortName evidence="4">GSI beta</shortName>
    </alternativeName>
</protein>
<evidence type="ECO:0000250" key="1">
    <source>
        <dbReference type="UniProtKB" id="P0A1P6"/>
    </source>
</evidence>
<evidence type="ECO:0000250" key="2">
    <source>
        <dbReference type="UniProtKB" id="P12425"/>
    </source>
</evidence>
<evidence type="ECO:0000250" key="3">
    <source>
        <dbReference type="UniProtKB" id="P77961"/>
    </source>
</evidence>
<evidence type="ECO:0000250" key="4">
    <source>
        <dbReference type="UniProtKB" id="P9WN39"/>
    </source>
</evidence>
<evidence type="ECO:0000255" key="5">
    <source>
        <dbReference type="PROSITE-ProRule" id="PRU01330"/>
    </source>
</evidence>
<evidence type="ECO:0000255" key="6">
    <source>
        <dbReference type="PROSITE-ProRule" id="PRU01331"/>
    </source>
</evidence>
<evidence type="ECO:0000305" key="7"/>
<feature type="chain" id="PRO_0000153221" description="Glutamine synthetase">
    <location>
        <begin position="1"/>
        <end position="474"/>
    </location>
</feature>
<feature type="domain" description="GS beta-grasp" evidence="5">
    <location>
        <begin position="15"/>
        <end position="99"/>
    </location>
</feature>
<feature type="domain" description="GS catalytic" evidence="6">
    <location>
        <begin position="107"/>
        <end position="474"/>
    </location>
</feature>
<feature type="binding site" evidence="4">
    <location>
        <position position="132"/>
    </location>
    <ligand>
        <name>Mg(2+)</name>
        <dbReference type="ChEBI" id="CHEBI:18420"/>
        <label>1</label>
    </ligand>
</feature>
<feature type="binding site" evidence="4">
    <location>
        <position position="134"/>
    </location>
    <ligand>
        <name>Mg(2+)</name>
        <dbReference type="ChEBI" id="CHEBI:18420"/>
        <label>2</label>
    </ligand>
</feature>
<feature type="binding site" evidence="4">
    <location>
        <position position="210"/>
    </location>
    <ligand>
        <name>ATP</name>
        <dbReference type="ChEBI" id="CHEBI:30616"/>
    </ligand>
</feature>
<feature type="binding site" evidence="4">
    <location>
        <position position="215"/>
    </location>
    <ligand>
        <name>Mg(2+)</name>
        <dbReference type="ChEBI" id="CHEBI:18420"/>
        <label>2</label>
    </ligand>
</feature>
<feature type="binding site" evidence="4">
    <location>
        <position position="223"/>
    </location>
    <ligand>
        <name>Mg(2+)</name>
        <dbReference type="ChEBI" id="CHEBI:18420"/>
        <label>2</label>
    </ligand>
</feature>
<feature type="binding site" evidence="4">
    <location>
        <begin position="267"/>
        <end position="268"/>
    </location>
    <ligand>
        <name>L-glutamate</name>
        <dbReference type="ChEBI" id="CHEBI:29985"/>
    </ligand>
</feature>
<feature type="binding site" evidence="2">
    <location>
        <position position="268"/>
    </location>
    <ligand>
        <name>L-glutamate</name>
        <dbReference type="ChEBI" id="CHEBI:29985"/>
    </ligand>
</feature>
<feature type="binding site" evidence="4">
    <location>
        <position position="272"/>
    </location>
    <ligand>
        <name>Mg(2+)</name>
        <dbReference type="ChEBI" id="CHEBI:18420"/>
        <label>1</label>
    </ligand>
</feature>
<feature type="binding site" evidence="4">
    <location>
        <begin position="274"/>
        <end position="276"/>
    </location>
    <ligand>
        <name>ATP</name>
        <dbReference type="ChEBI" id="CHEBI:30616"/>
    </ligand>
</feature>
<feature type="binding site" evidence="3">
    <location>
        <position position="276"/>
    </location>
    <ligand>
        <name>ATP</name>
        <dbReference type="ChEBI" id="CHEBI:30616"/>
    </ligand>
</feature>
<feature type="binding site" evidence="4">
    <location>
        <position position="325"/>
    </location>
    <ligand>
        <name>L-glutamate</name>
        <dbReference type="ChEBI" id="CHEBI:29985"/>
    </ligand>
</feature>
<feature type="binding site" evidence="1">
    <location>
        <position position="331"/>
    </location>
    <ligand>
        <name>L-glutamate</name>
        <dbReference type="ChEBI" id="CHEBI:29985"/>
    </ligand>
</feature>
<feature type="binding site" evidence="4">
    <location>
        <position position="343"/>
    </location>
    <ligand>
        <name>ATP</name>
        <dbReference type="ChEBI" id="CHEBI:30616"/>
    </ligand>
</feature>
<feature type="binding site" evidence="4">
    <location>
        <position position="343"/>
    </location>
    <ligand>
        <name>L-glutamate</name>
        <dbReference type="ChEBI" id="CHEBI:29985"/>
    </ligand>
</feature>
<feature type="binding site" evidence="4">
    <location>
        <position position="348"/>
    </location>
    <ligand>
        <name>ATP</name>
        <dbReference type="ChEBI" id="CHEBI:30616"/>
    </ligand>
</feature>
<feature type="binding site" evidence="3">
    <location>
        <position position="357"/>
    </location>
    <ligand>
        <name>ATP</name>
        <dbReference type="ChEBI" id="CHEBI:30616"/>
    </ligand>
</feature>
<feature type="binding site" evidence="4">
    <location>
        <position position="362"/>
    </location>
    <ligand>
        <name>Mg(2+)</name>
        <dbReference type="ChEBI" id="CHEBI:18420"/>
        <label>1</label>
    </ligand>
</feature>
<feature type="binding site" evidence="4">
    <location>
        <position position="364"/>
    </location>
    <ligand>
        <name>L-glutamate</name>
        <dbReference type="ChEBI" id="CHEBI:29985"/>
    </ligand>
</feature>
<feature type="modified residue" description="O-AMP-tyrosine" evidence="4">
    <location>
        <position position="402"/>
    </location>
</feature>
<dbReference type="EC" id="6.3.1.2" evidence="4"/>
<dbReference type="EMBL" id="L10631">
    <property type="status" value="NOT_ANNOTATED_CDS"/>
    <property type="molecule type" value="Genomic_DNA"/>
</dbReference>
<dbReference type="PIR" id="A40598">
    <property type="entry name" value="A40598"/>
</dbReference>
<dbReference type="SMR" id="P46033"/>
<dbReference type="GO" id="GO:0005737">
    <property type="term" value="C:cytoplasm"/>
    <property type="evidence" value="ECO:0007669"/>
    <property type="project" value="UniProtKB-SubCell"/>
</dbReference>
<dbReference type="GO" id="GO:0016020">
    <property type="term" value="C:membrane"/>
    <property type="evidence" value="ECO:0007669"/>
    <property type="project" value="TreeGrafter"/>
</dbReference>
<dbReference type="GO" id="GO:0005524">
    <property type="term" value="F:ATP binding"/>
    <property type="evidence" value="ECO:0007669"/>
    <property type="project" value="UniProtKB-KW"/>
</dbReference>
<dbReference type="GO" id="GO:0004356">
    <property type="term" value="F:glutamine synthetase activity"/>
    <property type="evidence" value="ECO:0007669"/>
    <property type="project" value="UniProtKB-EC"/>
</dbReference>
<dbReference type="GO" id="GO:0046872">
    <property type="term" value="F:metal ion binding"/>
    <property type="evidence" value="ECO:0007669"/>
    <property type="project" value="UniProtKB-KW"/>
</dbReference>
<dbReference type="GO" id="GO:0006542">
    <property type="term" value="P:glutamine biosynthetic process"/>
    <property type="evidence" value="ECO:0007669"/>
    <property type="project" value="InterPro"/>
</dbReference>
<dbReference type="GO" id="GO:0009399">
    <property type="term" value="P:nitrogen fixation"/>
    <property type="evidence" value="ECO:0007669"/>
    <property type="project" value="UniProtKB-KW"/>
</dbReference>
<dbReference type="GO" id="GO:0019740">
    <property type="term" value="P:nitrogen utilization"/>
    <property type="evidence" value="ECO:0007669"/>
    <property type="project" value="TreeGrafter"/>
</dbReference>
<dbReference type="FunFam" id="3.30.590.10:FF:000001">
    <property type="entry name" value="Glutamine synthetase"/>
    <property type="match status" value="1"/>
</dbReference>
<dbReference type="Gene3D" id="3.10.20.70">
    <property type="entry name" value="Glutamine synthetase, N-terminal domain"/>
    <property type="match status" value="1"/>
</dbReference>
<dbReference type="Gene3D" id="3.30.590.10">
    <property type="entry name" value="Glutamine synthetase/guanido kinase, catalytic domain"/>
    <property type="match status" value="1"/>
</dbReference>
<dbReference type="InterPro" id="IPR008147">
    <property type="entry name" value="Gln_synt_N"/>
</dbReference>
<dbReference type="InterPro" id="IPR036651">
    <property type="entry name" value="Gln_synt_N_sf"/>
</dbReference>
<dbReference type="InterPro" id="IPR014746">
    <property type="entry name" value="Gln_synth/guanido_kin_cat_dom"/>
</dbReference>
<dbReference type="InterPro" id="IPR008146">
    <property type="entry name" value="Gln_synth_cat_dom"/>
</dbReference>
<dbReference type="InterPro" id="IPR027303">
    <property type="entry name" value="Gln_synth_gly_rich_site"/>
</dbReference>
<dbReference type="InterPro" id="IPR004809">
    <property type="entry name" value="Gln_synth_I"/>
</dbReference>
<dbReference type="InterPro" id="IPR001637">
    <property type="entry name" value="Gln_synth_I_adenylation_site"/>
</dbReference>
<dbReference type="InterPro" id="IPR027302">
    <property type="entry name" value="Gln_synth_N_conserv_site"/>
</dbReference>
<dbReference type="NCBIfam" id="TIGR00653">
    <property type="entry name" value="GlnA"/>
    <property type="match status" value="1"/>
</dbReference>
<dbReference type="PANTHER" id="PTHR43407">
    <property type="entry name" value="GLUTAMINE SYNTHETASE"/>
    <property type="match status" value="1"/>
</dbReference>
<dbReference type="PANTHER" id="PTHR43407:SF1">
    <property type="entry name" value="LENGSIN"/>
    <property type="match status" value="1"/>
</dbReference>
<dbReference type="Pfam" id="PF00120">
    <property type="entry name" value="Gln-synt_C"/>
    <property type="match status" value="1"/>
</dbReference>
<dbReference type="Pfam" id="PF03951">
    <property type="entry name" value="Gln-synt_N"/>
    <property type="match status" value="1"/>
</dbReference>
<dbReference type="SMART" id="SM01230">
    <property type="entry name" value="Gln-synt_C"/>
    <property type="match status" value="1"/>
</dbReference>
<dbReference type="SUPFAM" id="SSF54368">
    <property type="entry name" value="Glutamine synthetase, N-terminal domain"/>
    <property type="match status" value="1"/>
</dbReference>
<dbReference type="SUPFAM" id="SSF55931">
    <property type="entry name" value="Glutamine synthetase/guanido kinase"/>
    <property type="match status" value="1"/>
</dbReference>
<dbReference type="PROSITE" id="PS00180">
    <property type="entry name" value="GLNA_1"/>
    <property type="match status" value="1"/>
</dbReference>
<dbReference type="PROSITE" id="PS00182">
    <property type="entry name" value="GLNA_ADENYLATION"/>
    <property type="match status" value="1"/>
</dbReference>
<dbReference type="PROSITE" id="PS00181">
    <property type="entry name" value="GLNA_ATP"/>
    <property type="match status" value="1"/>
</dbReference>
<dbReference type="PROSITE" id="PS51986">
    <property type="entry name" value="GS_BETA_GRASP"/>
    <property type="match status" value="1"/>
</dbReference>
<dbReference type="PROSITE" id="PS51987">
    <property type="entry name" value="GS_CATALYTIC"/>
    <property type="match status" value="1"/>
</dbReference>
<name>GLN1B_FRAAL</name>
<reference key="1">
    <citation type="journal article" date="1993" name="J. Bacteriol.">
        <title>Close linkage of genes encoding glutamine synthetases I and II in Frankia alni CpI1.</title>
        <authorList>
            <person name="Hosted T.J."/>
            <person name="Rochefort D.A."/>
            <person name="Benson D.R."/>
        </authorList>
    </citation>
    <scope>NUCLEOTIDE SEQUENCE [GENOMIC DNA]</scope>
    <source>
        <strain>CpI1</strain>
    </source>
</reference>
<sequence length="474" mass="53952">MFTKAEDVLRYIRDEDVQFIDVRFCDLPGIMQHFTIPTQVFAESVFTDGLMFDGSSIRGFQAIHESDMLLLPDPQTAFVDPFREHKTLAMTFFIHDPITKEQYSRDPRNIAKKAETYLRGTSIADTAYFGPEAEFYIFDDVRYDYNPYGSMHHVDSVEAAWNTSRKEEGGNLGYKPRFKGGYFPVPPTDHFTDLRSEMTRVLYETGITVEMQHHEVGTAGQAEIDIRYDTLLKTADNLMLYKYVIRNVARSRGKTVTFMPKPLFEDNGSGMHVHSSLWKDGEPLFYSPNGYGGLSDTARYYIGGLLHHAPALLAFTNPTTNSYRRLVPGYEAPVNLVYSARNRSACCRIPLGGDSPKAKRVEFRVPDPSCNPYLAFAAMLMAGLDGIRNKIDPPDPIDKDLYELPPDELAAVPQVPGSLEKVLDALEADNDFLREGDVFTTDLIETWLEYKRLNEVDAIRLRPHPYEFTLYYDI</sequence>
<accession>P46033</accession>
<gene>
    <name evidence="4" type="primary">glnA</name>
</gene>
<comment type="function">
    <text evidence="4">Catalyzes the ATP-dependent biosynthesis of glutamine from glutamate and ammonia.</text>
</comment>
<comment type="catalytic activity">
    <reaction evidence="4">
        <text>L-glutamate + NH4(+) + ATP = L-glutamine + ADP + phosphate + H(+)</text>
        <dbReference type="Rhea" id="RHEA:16169"/>
        <dbReference type="ChEBI" id="CHEBI:15378"/>
        <dbReference type="ChEBI" id="CHEBI:28938"/>
        <dbReference type="ChEBI" id="CHEBI:29985"/>
        <dbReference type="ChEBI" id="CHEBI:30616"/>
        <dbReference type="ChEBI" id="CHEBI:43474"/>
        <dbReference type="ChEBI" id="CHEBI:58359"/>
        <dbReference type="ChEBI" id="CHEBI:456216"/>
        <dbReference type="EC" id="6.3.1.2"/>
    </reaction>
</comment>
<comment type="cofactor">
    <cofactor evidence="4">
        <name>Mg(2+)</name>
        <dbReference type="ChEBI" id="CHEBI:18420"/>
    </cofactor>
    <text evidence="4">Binds 2 Mg(2+) ions per subunit.</text>
</comment>
<comment type="activity regulation">
    <text evidence="4">The activity of this enzyme could be controlled by adenylation under conditions of abundant glutamine.</text>
</comment>
<comment type="subunit">
    <text evidence="4">Oligomer of 12 subunits arranged in the form of two hexagons.</text>
</comment>
<comment type="subcellular location">
    <subcellularLocation>
        <location evidence="4">Cytoplasm</location>
    </subcellularLocation>
</comment>
<comment type="miscellaneous">
    <text evidence="7">Two forms of glutamine synthetase (GSI and GSII) can be found in this nitrogen fixing bacteria, GSI is a typical prokaryotic glutamine synthetase whereas GSII is similar to the eukaryotic enzyme.</text>
</comment>
<comment type="similarity">
    <text evidence="4">Belongs to the glutamine synthetase family.</text>
</comment>
<keyword id="KW-0067">ATP-binding</keyword>
<keyword id="KW-0963">Cytoplasm</keyword>
<keyword id="KW-0436">Ligase</keyword>
<keyword id="KW-0460">Magnesium</keyword>
<keyword id="KW-0479">Metal-binding</keyword>
<keyword id="KW-0535">Nitrogen fixation</keyword>
<keyword id="KW-0547">Nucleotide-binding</keyword>
<keyword id="KW-0597">Phosphoprotein</keyword>
<proteinExistence type="inferred from homology"/>
<organism>
    <name type="scientific">Frankia alni</name>
    <dbReference type="NCBI Taxonomy" id="1859"/>
    <lineage>
        <taxon>Bacteria</taxon>
        <taxon>Bacillati</taxon>
        <taxon>Actinomycetota</taxon>
        <taxon>Actinomycetes</taxon>
        <taxon>Frankiales</taxon>
        <taxon>Frankiaceae</taxon>
        <taxon>Frankia</taxon>
    </lineage>
</organism>